<name>NUFP1_MOUSE</name>
<organism>
    <name type="scientific">Mus musculus</name>
    <name type="common">Mouse</name>
    <dbReference type="NCBI Taxonomy" id="10090"/>
    <lineage>
        <taxon>Eukaryota</taxon>
        <taxon>Metazoa</taxon>
        <taxon>Chordata</taxon>
        <taxon>Craniata</taxon>
        <taxon>Vertebrata</taxon>
        <taxon>Euteleostomi</taxon>
        <taxon>Mammalia</taxon>
        <taxon>Eutheria</taxon>
        <taxon>Euarchontoglires</taxon>
        <taxon>Glires</taxon>
        <taxon>Rodentia</taxon>
        <taxon>Myomorpha</taxon>
        <taxon>Muroidea</taxon>
        <taxon>Muridae</taxon>
        <taxon>Murinae</taxon>
        <taxon>Mus</taxon>
        <taxon>Mus</taxon>
    </lineage>
</organism>
<gene>
    <name evidence="6" type="primary">Nufip1</name>
</gene>
<reference key="1">
    <citation type="journal article" date="1999" name="Hum. Mol. Genet.">
        <title>A novel RNA-binding nuclear protein that interacts with the fragile X mental retardation (FMR1) protein.</title>
        <authorList>
            <person name="Bardoni B."/>
            <person name="Schenck A."/>
            <person name="Mandel J.-L."/>
        </authorList>
    </citation>
    <scope>NUCLEOTIDE SEQUENCE [MRNA]</scope>
    <scope>FUNCTION</scope>
    <scope>SUBCELLULAR LOCATION</scope>
    <scope>TISSUE SPECIFICITY</scope>
    <scope>INTERACTION WITH FMR1</scope>
</reference>
<reference key="2">
    <citation type="journal article" date="2005" name="Science">
        <title>The transcriptional landscape of the mammalian genome.</title>
        <authorList>
            <person name="Carninci P."/>
            <person name="Kasukawa T."/>
            <person name="Katayama S."/>
            <person name="Gough J."/>
            <person name="Frith M.C."/>
            <person name="Maeda N."/>
            <person name="Oyama R."/>
            <person name="Ravasi T."/>
            <person name="Lenhard B."/>
            <person name="Wells C."/>
            <person name="Kodzius R."/>
            <person name="Shimokawa K."/>
            <person name="Bajic V.B."/>
            <person name="Brenner S.E."/>
            <person name="Batalov S."/>
            <person name="Forrest A.R."/>
            <person name="Zavolan M."/>
            <person name="Davis M.J."/>
            <person name="Wilming L.G."/>
            <person name="Aidinis V."/>
            <person name="Allen J.E."/>
            <person name="Ambesi-Impiombato A."/>
            <person name="Apweiler R."/>
            <person name="Aturaliya R.N."/>
            <person name="Bailey T.L."/>
            <person name="Bansal M."/>
            <person name="Baxter L."/>
            <person name="Beisel K.W."/>
            <person name="Bersano T."/>
            <person name="Bono H."/>
            <person name="Chalk A.M."/>
            <person name="Chiu K.P."/>
            <person name="Choudhary V."/>
            <person name="Christoffels A."/>
            <person name="Clutterbuck D.R."/>
            <person name="Crowe M.L."/>
            <person name="Dalla E."/>
            <person name="Dalrymple B.P."/>
            <person name="de Bono B."/>
            <person name="Della Gatta G."/>
            <person name="di Bernardo D."/>
            <person name="Down T."/>
            <person name="Engstrom P."/>
            <person name="Fagiolini M."/>
            <person name="Faulkner G."/>
            <person name="Fletcher C.F."/>
            <person name="Fukushima T."/>
            <person name="Furuno M."/>
            <person name="Futaki S."/>
            <person name="Gariboldi M."/>
            <person name="Georgii-Hemming P."/>
            <person name="Gingeras T.R."/>
            <person name="Gojobori T."/>
            <person name="Green R.E."/>
            <person name="Gustincich S."/>
            <person name="Harbers M."/>
            <person name="Hayashi Y."/>
            <person name="Hensch T.K."/>
            <person name="Hirokawa N."/>
            <person name="Hill D."/>
            <person name="Huminiecki L."/>
            <person name="Iacono M."/>
            <person name="Ikeo K."/>
            <person name="Iwama A."/>
            <person name="Ishikawa T."/>
            <person name="Jakt M."/>
            <person name="Kanapin A."/>
            <person name="Katoh M."/>
            <person name="Kawasawa Y."/>
            <person name="Kelso J."/>
            <person name="Kitamura H."/>
            <person name="Kitano H."/>
            <person name="Kollias G."/>
            <person name="Krishnan S.P."/>
            <person name="Kruger A."/>
            <person name="Kummerfeld S.K."/>
            <person name="Kurochkin I.V."/>
            <person name="Lareau L.F."/>
            <person name="Lazarevic D."/>
            <person name="Lipovich L."/>
            <person name="Liu J."/>
            <person name="Liuni S."/>
            <person name="McWilliam S."/>
            <person name="Madan Babu M."/>
            <person name="Madera M."/>
            <person name="Marchionni L."/>
            <person name="Matsuda H."/>
            <person name="Matsuzawa S."/>
            <person name="Miki H."/>
            <person name="Mignone F."/>
            <person name="Miyake S."/>
            <person name="Morris K."/>
            <person name="Mottagui-Tabar S."/>
            <person name="Mulder N."/>
            <person name="Nakano N."/>
            <person name="Nakauchi H."/>
            <person name="Ng P."/>
            <person name="Nilsson R."/>
            <person name="Nishiguchi S."/>
            <person name="Nishikawa S."/>
            <person name="Nori F."/>
            <person name="Ohara O."/>
            <person name="Okazaki Y."/>
            <person name="Orlando V."/>
            <person name="Pang K.C."/>
            <person name="Pavan W.J."/>
            <person name="Pavesi G."/>
            <person name="Pesole G."/>
            <person name="Petrovsky N."/>
            <person name="Piazza S."/>
            <person name="Reed J."/>
            <person name="Reid J.F."/>
            <person name="Ring B.Z."/>
            <person name="Ringwald M."/>
            <person name="Rost B."/>
            <person name="Ruan Y."/>
            <person name="Salzberg S.L."/>
            <person name="Sandelin A."/>
            <person name="Schneider C."/>
            <person name="Schoenbach C."/>
            <person name="Sekiguchi K."/>
            <person name="Semple C.A."/>
            <person name="Seno S."/>
            <person name="Sessa L."/>
            <person name="Sheng Y."/>
            <person name="Shibata Y."/>
            <person name="Shimada H."/>
            <person name="Shimada K."/>
            <person name="Silva D."/>
            <person name="Sinclair B."/>
            <person name="Sperling S."/>
            <person name="Stupka E."/>
            <person name="Sugiura K."/>
            <person name="Sultana R."/>
            <person name="Takenaka Y."/>
            <person name="Taki K."/>
            <person name="Tammoja K."/>
            <person name="Tan S.L."/>
            <person name="Tang S."/>
            <person name="Taylor M.S."/>
            <person name="Tegner J."/>
            <person name="Teichmann S.A."/>
            <person name="Ueda H.R."/>
            <person name="van Nimwegen E."/>
            <person name="Verardo R."/>
            <person name="Wei C.L."/>
            <person name="Yagi K."/>
            <person name="Yamanishi H."/>
            <person name="Zabarovsky E."/>
            <person name="Zhu S."/>
            <person name="Zimmer A."/>
            <person name="Hide W."/>
            <person name="Bult C."/>
            <person name="Grimmond S.M."/>
            <person name="Teasdale R.D."/>
            <person name="Liu E.T."/>
            <person name="Brusic V."/>
            <person name="Quackenbush J."/>
            <person name="Wahlestedt C."/>
            <person name="Mattick J.S."/>
            <person name="Hume D.A."/>
            <person name="Kai C."/>
            <person name="Sasaki D."/>
            <person name="Tomaru Y."/>
            <person name="Fukuda S."/>
            <person name="Kanamori-Katayama M."/>
            <person name="Suzuki M."/>
            <person name="Aoki J."/>
            <person name="Arakawa T."/>
            <person name="Iida J."/>
            <person name="Imamura K."/>
            <person name="Itoh M."/>
            <person name="Kato T."/>
            <person name="Kawaji H."/>
            <person name="Kawagashira N."/>
            <person name="Kawashima T."/>
            <person name="Kojima M."/>
            <person name="Kondo S."/>
            <person name="Konno H."/>
            <person name="Nakano K."/>
            <person name="Ninomiya N."/>
            <person name="Nishio T."/>
            <person name="Okada M."/>
            <person name="Plessy C."/>
            <person name="Shibata K."/>
            <person name="Shiraki T."/>
            <person name="Suzuki S."/>
            <person name="Tagami M."/>
            <person name="Waki K."/>
            <person name="Watahiki A."/>
            <person name="Okamura-Oho Y."/>
            <person name="Suzuki H."/>
            <person name="Kawai J."/>
            <person name="Hayashizaki Y."/>
        </authorList>
    </citation>
    <scope>NUCLEOTIDE SEQUENCE [LARGE SCALE MRNA]</scope>
    <source>
        <strain>C57BL/6J</strain>
        <strain>NOD</strain>
        <tissue>Olfactory bulb</tissue>
        <tissue>Spleen</tissue>
        <tissue>Tongue</tissue>
    </source>
</reference>
<reference key="3">
    <citation type="journal article" date="2004" name="Genome Res.">
        <title>The status, quality, and expansion of the NIH full-length cDNA project: the Mammalian Gene Collection (MGC).</title>
        <authorList>
            <consortium name="The MGC Project Team"/>
        </authorList>
    </citation>
    <scope>NUCLEOTIDE SEQUENCE [LARGE SCALE MRNA]</scope>
    <source>
        <strain>B5/EGFP</strain>
        <tissue>Trophoblast stem cell</tissue>
    </source>
</reference>
<evidence type="ECO:0000250" key="1">
    <source>
        <dbReference type="UniProtKB" id="Q9UHK0"/>
    </source>
</evidence>
<evidence type="ECO:0000255" key="2">
    <source>
        <dbReference type="PROSITE-ProRule" id="PRU00042"/>
    </source>
</evidence>
<evidence type="ECO:0000256" key="3">
    <source>
        <dbReference type="SAM" id="MobiDB-lite"/>
    </source>
</evidence>
<evidence type="ECO:0000269" key="4">
    <source>
    </source>
</evidence>
<evidence type="ECO:0000305" key="5">
    <source>
    </source>
</evidence>
<evidence type="ECO:0000312" key="6">
    <source>
        <dbReference type="MGI" id="MGI:1351474"/>
    </source>
</evidence>
<comment type="function">
    <text evidence="4">Binds RNA.</text>
</comment>
<comment type="subunit">
    <text evidence="1 4">Interacts with FMR1 (PubMed:10556305). Interacts with ZNHIT3 (By similarity). Interacts with NOP2, NOP56 and RUVBL1 (By similarity).</text>
</comment>
<comment type="subcellular location">
    <subcellularLocation>
        <location evidence="4">Nucleus</location>
    </subcellularLocation>
    <text>Distributed in the nucleus in a dot-like pattern.</text>
</comment>
<comment type="tissue specificity">
    <text evidence="4">Expressed in the brain; in neurons and not in glial cells.</text>
</comment>
<sequence length="484" mass="54713">MAEPAPAVWPSAPDLTPAPGTPSEAAPPRDNWVYWAMLPPPPPPLSSPVAGSEQSRKGQPHVLPQPPSGALPPFDAQILPAAQPPFDAQAPPDAQSQFSGQQAWNLQASTPWYWGLSPNGFSTYHTSYQSPVTHSYFPRSHDAKFNLPQNRKQKTKKRKEPVFHFFCDTCDRGFKNQEKYDTHMSEHTKCPEVDCSFSAHEKIVQFHWRNMHAPGMKKIKLDTPEEIARWREERRKNYPTLANIERKKKLQLEKAKRGEVLTTTQYGKMKGMSRHSQMAKIRSPGKHHKWRRGGARQRAVVGLGNHARDSKPEVPSKANVDPLGALIHSDSESDKEEKAQRTVVPKEVTPALCSLMSSYGDVSGSDSEPEEAPIKTEAEVLAENHVLHSSPPKSPKQNVQTTGRTVSRSKWENQRNGLRKISLKRKKSHCHPLFEPRTHHPYLLEMLLAPDIRHERNVILQCVRYIIKKDFFGLNTDSVKTEEV</sequence>
<accession>Q9QXX8</accession>
<accession>Q9CV69</accession>
<dbReference type="EMBL" id="AK032324">
    <property type="protein sequence ID" value="BAC27815.1"/>
    <property type="molecule type" value="mRNA"/>
</dbReference>
<dbReference type="EMBL" id="AK009260">
    <property type="protein sequence ID" value="BAB26177.1"/>
    <property type="molecule type" value="mRNA"/>
</dbReference>
<dbReference type="EMBL" id="AK156205">
    <property type="protein sequence ID" value="BAE33625.1"/>
    <property type="molecule type" value="mRNA"/>
</dbReference>
<dbReference type="EMBL" id="AF159549">
    <property type="protein sequence ID" value="AAF15316.1"/>
    <property type="molecule type" value="mRNA"/>
</dbReference>
<dbReference type="EMBL" id="BC056192">
    <property type="protein sequence ID" value="AAH56192.1"/>
    <property type="molecule type" value="mRNA"/>
</dbReference>
<dbReference type="CCDS" id="CCDS27284.1"/>
<dbReference type="RefSeq" id="NP_038773.1">
    <property type="nucleotide sequence ID" value="NM_013745.6"/>
</dbReference>
<dbReference type="SMR" id="Q9QXX8"/>
<dbReference type="BioGRID" id="205155">
    <property type="interactions" value="3"/>
</dbReference>
<dbReference type="FunCoup" id="Q9QXX8">
    <property type="interactions" value="3063"/>
</dbReference>
<dbReference type="IntAct" id="Q9QXX8">
    <property type="interactions" value="1"/>
</dbReference>
<dbReference type="MINT" id="Q9QXX8"/>
<dbReference type="STRING" id="10090.ENSMUSP00000022586"/>
<dbReference type="GlyGen" id="Q9QXX8">
    <property type="glycosylation" value="1 site"/>
</dbReference>
<dbReference type="iPTMnet" id="Q9QXX8"/>
<dbReference type="PhosphoSitePlus" id="Q9QXX8"/>
<dbReference type="jPOST" id="Q9QXX8"/>
<dbReference type="PaxDb" id="10090-ENSMUSP00000022586"/>
<dbReference type="PeptideAtlas" id="Q9QXX8"/>
<dbReference type="ProteomicsDB" id="295464"/>
<dbReference type="Pumba" id="Q9QXX8"/>
<dbReference type="Antibodypedia" id="23576">
    <property type="antibodies" value="96 antibodies from 28 providers"/>
</dbReference>
<dbReference type="Ensembl" id="ENSMUST00000022586.2">
    <property type="protein sequence ID" value="ENSMUSP00000022586.2"/>
    <property type="gene ID" value="ENSMUSG00000022009.2"/>
</dbReference>
<dbReference type="GeneID" id="27275"/>
<dbReference type="KEGG" id="mmu:27275"/>
<dbReference type="UCSC" id="uc007ure.1">
    <property type="organism name" value="mouse"/>
</dbReference>
<dbReference type="AGR" id="MGI:1351474"/>
<dbReference type="CTD" id="26747"/>
<dbReference type="MGI" id="MGI:1351474">
    <property type="gene designation" value="Nufip1"/>
</dbReference>
<dbReference type="VEuPathDB" id="HostDB:ENSMUSG00000022009"/>
<dbReference type="eggNOG" id="ENOG502QPTB">
    <property type="taxonomic scope" value="Eukaryota"/>
</dbReference>
<dbReference type="GeneTree" id="ENSGT00390000003758"/>
<dbReference type="HOGENOM" id="CLU_038059_0_0_1"/>
<dbReference type="InParanoid" id="Q9QXX8"/>
<dbReference type="OMA" id="WMFWAML"/>
<dbReference type="OrthoDB" id="273070at2759"/>
<dbReference type="PhylomeDB" id="Q9QXX8"/>
<dbReference type="TreeFam" id="TF329804"/>
<dbReference type="BioGRID-ORCS" id="27275">
    <property type="hits" value="18 hits in 80 CRISPR screens"/>
</dbReference>
<dbReference type="ChiTaRS" id="Nufip1">
    <property type="organism name" value="mouse"/>
</dbReference>
<dbReference type="PRO" id="PR:Q9QXX8"/>
<dbReference type="Proteomes" id="UP000000589">
    <property type="component" value="Chromosome 14"/>
</dbReference>
<dbReference type="RNAct" id="Q9QXX8">
    <property type="molecule type" value="protein"/>
</dbReference>
<dbReference type="Bgee" id="ENSMUSG00000022009">
    <property type="expression patterns" value="Expressed in cleaving embryo and 254 other cell types or tissues"/>
</dbReference>
<dbReference type="GO" id="GO:0001650">
    <property type="term" value="C:fibrillar center"/>
    <property type="evidence" value="ECO:0007669"/>
    <property type="project" value="Ensembl"/>
</dbReference>
<dbReference type="GO" id="GO:0016363">
    <property type="term" value="C:nuclear matrix"/>
    <property type="evidence" value="ECO:0000250"/>
    <property type="project" value="HGNC-UCL"/>
</dbReference>
<dbReference type="GO" id="GO:0005730">
    <property type="term" value="C:nucleolus"/>
    <property type="evidence" value="ECO:0000250"/>
    <property type="project" value="HGNC-UCL"/>
</dbReference>
<dbReference type="GO" id="GO:0005634">
    <property type="term" value="C:nucleus"/>
    <property type="evidence" value="ECO:0000314"/>
    <property type="project" value="MGI"/>
</dbReference>
<dbReference type="GO" id="GO:0005726">
    <property type="term" value="C:perichromatin fibrils"/>
    <property type="evidence" value="ECO:0000250"/>
    <property type="project" value="HGNC-UCL"/>
</dbReference>
<dbReference type="GO" id="GO:0070761">
    <property type="term" value="C:pre-snoRNP complex"/>
    <property type="evidence" value="ECO:0007669"/>
    <property type="project" value="Ensembl"/>
</dbReference>
<dbReference type="GO" id="GO:0048786">
    <property type="term" value="C:presynaptic active zone"/>
    <property type="evidence" value="ECO:0007669"/>
    <property type="project" value="Ensembl"/>
</dbReference>
<dbReference type="GO" id="GO:0045202">
    <property type="term" value="C:synapse"/>
    <property type="evidence" value="ECO:0000314"/>
    <property type="project" value="SynGO"/>
</dbReference>
<dbReference type="GO" id="GO:0008023">
    <property type="term" value="C:transcription elongation factor complex"/>
    <property type="evidence" value="ECO:0000250"/>
    <property type="project" value="HGNC-UCL"/>
</dbReference>
<dbReference type="GO" id="GO:0051117">
    <property type="term" value="F:ATPase binding"/>
    <property type="evidence" value="ECO:0007669"/>
    <property type="project" value="Ensembl"/>
</dbReference>
<dbReference type="GO" id="GO:0042802">
    <property type="term" value="F:identical protein binding"/>
    <property type="evidence" value="ECO:0007669"/>
    <property type="project" value="Ensembl"/>
</dbReference>
<dbReference type="GO" id="GO:0030674">
    <property type="term" value="F:protein-macromolecule adaptor activity"/>
    <property type="evidence" value="ECO:0007669"/>
    <property type="project" value="Ensembl"/>
</dbReference>
<dbReference type="GO" id="GO:0003723">
    <property type="term" value="F:RNA binding"/>
    <property type="evidence" value="ECO:0000314"/>
    <property type="project" value="MGI"/>
</dbReference>
<dbReference type="GO" id="GO:0030515">
    <property type="term" value="F:snoRNA binding"/>
    <property type="evidence" value="ECO:0007669"/>
    <property type="project" value="Ensembl"/>
</dbReference>
<dbReference type="GO" id="GO:0008270">
    <property type="term" value="F:zinc ion binding"/>
    <property type="evidence" value="ECO:0007669"/>
    <property type="project" value="UniProtKB-KW"/>
</dbReference>
<dbReference type="GO" id="GO:0000492">
    <property type="term" value="P:box C/D snoRNP assembly"/>
    <property type="evidence" value="ECO:0007669"/>
    <property type="project" value="Ensembl"/>
</dbReference>
<dbReference type="GO" id="GO:0045944">
    <property type="term" value="P:positive regulation of transcription by RNA polymerase II"/>
    <property type="evidence" value="ECO:0000250"/>
    <property type="project" value="HGNC-UCL"/>
</dbReference>
<dbReference type="InterPro" id="IPR039136">
    <property type="entry name" value="NUFIP1-like"/>
</dbReference>
<dbReference type="InterPro" id="IPR019496">
    <property type="entry name" value="NUFIP1_cons_dom"/>
</dbReference>
<dbReference type="InterPro" id="IPR013087">
    <property type="entry name" value="Znf_C2H2_type"/>
</dbReference>
<dbReference type="PANTHER" id="PTHR13309:SF0">
    <property type="entry name" value="FMR1-INTERACTING PROTEIN NUFIP1"/>
    <property type="match status" value="1"/>
</dbReference>
<dbReference type="PANTHER" id="PTHR13309">
    <property type="entry name" value="NUCLEAR FRAGILE X MENTAL RETARDATION PROTEIN INTERACTING PROTEIN 1"/>
    <property type="match status" value="1"/>
</dbReference>
<dbReference type="Pfam" id="PF10453">
    <property type="entry name" value="NUFIP1"/>
    <property type="match status" value="1"/>
</dbReference>
<dbReference type="SMART" id="SM00355">
    <property type="entry name" value="ZnF_C2H2"/>
    <property type="match status" value="2"/>
</dbReference>
<dbReference type="PROSITE" id="PS00028">
    <property type="entry name" value="ZINC_FINGER_C2H2_1"/>
    <property type="match status" value="1"/>
</dbReference>
<dbReference type="PROSITE" id="PS50157">
    <property type="entry name" value="ZINC_FINGER_C2H2_2"/>
    <property type="match status" value="1"/>
</dbReference>
<keyword id="KW-0479">Metal-binding</keyword>
<keyword id="KW-0539">Nucleus</keyword>
<keyword id="KW-0597">Phosphoprotein</keyword>
<keyword id="KW-1185">Reference proteome</keyword>
<keyword id="KW-0694">RNA-binding</keyword>
<keyword id="KW-0862">Zinc</keyword>
<keyword id="KW-0863">Zinc-finger</keyword>
<protein>
    <recommendedName>
        <fullName evidence="5">FMR1-interacting protein NUFIP1</fullName>
    </recommendedName>
    <alternativeName>
        <fullName>Nuclear FMRP-interacting protein 1</fullName>
    </alternativeName>
</protein>
<feature type="chain" id="PRO_0000245519" description="FMR1-interacting protein NUFIP1">
    <location>
        <begin position="1"/>
        <end position="484"/>
    </location>
</feature>
<feature type="zinc finger region" description="C2H2-type" evidence="2">
    <location>
        <begin position="165"/>
        <end position="187"/>
    </location>
</feature>
<feature type="region of interest" description="Disordered" evidence="3">
    <location>
        <begin position="1"/>
        <end position="28"/>
    </location>
</feature>
<feature type="region of interest" description="Disordered" evidence="3">
    <location>
        <begin position="43"/>
        <end position="77"/>
    </location>
</feature>
<feature type="region of interest" description="Disordered" evidence="3">
    <location>
        <begin position="269"/>
        <end position="294"/>
    </location>
</feature>
<feature type="region of interest" description="Disordered" evidence="3">
    <location>
        <begin position="386"/>
        <end position="415"/>
    </location>
</feature>
<feature type="short sequence motif" description="Bipartite nuclear localization signal">
    <location>
        <begin position="234"/>
        <end position="250"/>
    </location>
</feature>
<feature type="compositionally biased region" description="Basic residues" evidence="3">
    <location>
        <begin position="283"/>
        <end position="294"/>
    </location>
</feature>
<feature type="compositionally biased region" description="Polar residues" evidence="3">
    <location>
        <begin position="395"/>
        <end position="408"/>
    </location>
</feature>
<feature type="modified residue" description="Phosphoserine" evidence="1">
    <location>
        <position position="329"/>
    </location>
</feature>
<feature type="modified residue" description="Phosphoserine" evidence="1">
    <location>
        <position position="331"/>
    </location>
</feature>
<feature type="modified residue" description="Phosphoserine" evidence="1">
    <location>
        <position position="333"/>
    </location>
</feature>
<feature type="modified residue" description="Phosphoserine" evidence="1">
    <location>
        <position position="394"/>
    </location>
</feature>
<proteinExistence type="evidence at protein level"/>